<accession>P05418</accession>
<name>CYB_PARDE</name>
<sequence length="440" mass="50116">MAGIPHDHYEPKTGFERWLHRRLPIVSLVYDTLMIPTPKNLNWWWIWGIVLAFCLVLQIATGIVLVMHYTPHVDLAFASVEHIMRDVNGGYMLRYLHANGASLFFLAVYIHIFRGLYYGSYKAPREVTWIVGMLIYLMMMGTAFMGYVLPWGQMSFWGATVITGLFGAIPGVGEAIQTWLLGGPAVDNPTLNRFFSLHYLLPFVIAALVVVHIWAFHTTGNNNPTGVEVRRGSKEEAKKDTLPFWPYFVIKDLFALAVVLVVFFAIVGFMPNYLGHPDNYIEANPLVTPAHIVPEWYFLPFYAILRAFTADVWVVMLVNWLSFGIIDAKFFGVIAMFGAILVMALVPWLDTSRVRSGQYRPLFKWWFWLLAVDFVVLMWVGAMPAEGIYPYIALAGSAYWFAYFLIILPLLGIIEKPDAMPQTIEEDFNAHYGPETHPAE</sequence>
<comment type="function">
    <text evidence="1">Component of the ubiquinol-cytochrome c reductase complex (complex III or cytochrome b-c1 complex), which is a respiratory chain that generates an electrochemical potential coupled to ATP synthesis.</text>
</comment>
<comment type="cofactor">
    <cofactor evidence="1">
        <name>heme b</name>
        <dbReference type="ChEBI" id="CHEBI:60344"/>
    </cofactor>
    <text evidence="1">Binds 2 heme b groups non-covalently.</text>
</comment>
<comment type="subunit">
    <text evidence="1">The main subunits of complex b-c1 are: cytochrome b, cytochrome c1 and the Rieske protein.</text>
</comment>
<comment type="subcellular location">
    <subcellularLocation>
        <location evidence="5">Cell membrane</location>
        <topology evidence="5">Multi-pass membrane protein</topology>
    </subcellularLocation>
</comment>
<comment type="miscellaneous">
    <text evidence="1">Heme 1 (or BL or b562) is low-potential and absorbs at about 562 nm, and heme 2 (or BH or b566) is high-potential and absorbs at about 566 nm.</text>
</comment>
<comment type="similarity">
    <text evidence="3 4">Belongs to the cytochrome b family.</text>
</comment>
<keyword id="KW-0002">3D-structure</keyword>
<keyword id="KW-1003">Cell membrane</keyword>
<keyword id="KW-0249">Electron transport</keyword>
<keyword id="KW-0349">Heme</keyword>
<keyword id="KW-0408">Iron</keyword>
<keyword id="KW-0472">Membrane</keyword>
<keyword id="KW-0479">Metal-binding</keyword>
<keyword id="KW-0679">Respiratory chain</keyword>
<keyword id="KW-0812">Transmembrane</keyword>
<keyword id="KW-1133">Transmembrane helix</keyword>
<keyword id="KW-0813">Transport</keyword>
<reference key="1">
    <citation type="journal article" date="1987" name="J. Biol. Chem.">
        <title>The genes of the Paracoccus denitrificans bc1 complex. Nucleotide sequence and homologies between bacterial and mitochondrial subunits.</title>
        <authorList>
            <person name="Kurowski B."/>
            <person name="Ludwig B."/>
        </authorList>
    </citation>
    <scope>NUCLEOTIDE SEQUENCE [GENOMIC DNA]</scope>
</reference>
<proteinExistence type="evidence at protein level"/>
<gene>
    <name type="primary">petB</name>
</gene>
<evidence type="ECO:0000250" key="1"/>
<evidence type="ECO:0000255" key="2"/>
<evidence type="ECO:0000255" key="3">
    <source>
        <dbReference type="PROSITE-ProRule" id="PRU00967"/>
    </source>
</evidence>
<evidence type="ECO:0000255" key="4">
    <source>
        <dbReference type="PROSITE-ProRule" id="PRU00968"/>
    </source>
</evidence>
<evidence type="ECO:0000305" key="5"/>
<evidence type="ECO:0007829" key="6">
    <source>
        <dbReference type="PDB" id="2YIU"/>
    </source>
</evidence>
<feature type="chain" id="PRO_0000061771" description="Cytochrome b">
    <location>
        <begin position="1"/>
        <end position="440"/>
    </location>
</feature>
<feature type="transmembrane region" description="Helical" evidence="2">
    <location>
        <begin position="46"/>
        <end position="66"/>
    </location>
</feature>
<feature type="transmembrane region" description="Helical" evidence="2">
    <location>
        <begin position="100"/>
        <end position="120"/>
    </location>
</feature>
<feature type="transmembrane region" description="Helical" evidence="2">
    <location>
        <begin position="129"/>
        <end position="149"/>
    </location>
</feature>
<feature type="transmembrane region" description="Helical" evidence="2">
    <location>
        <begin position="156"/>
        <end position="176"/>
    </location>
</feature>
<feature type="transmembrane region" description="Helical" evidence="2">
    <location>
        <begin position="194"/>
        <end position="214"/>
    </location>
</feature>
<feature type="transmembrane region" description="Helical" evidence="2">
    <location>
        <begin position="253"/>
        <end position="273"/>
    </location>
</feature>
<feature type="transmembrane region" description="Helical" evidence="2">
    <location>
        <begin position="296"/>
        <end position="315"/>
    </location>
</feature>
<feature type="transmembrane region" description="Helical" evidence="2">
    <location>
        <begin position="330"/>
        <end position="350"/>
    </location>
</feature>
<feature type="transmembrane region" description="Helical" evidence="2">
    <location>
        <begin position="365"/>
        <end position="385"/>
    </location>
</feature>
<feature type="transmembrane region" description="Helical" evidence="2">
    <location>
        <begin position="394"/>
        <end position="414"/>
    </location>
</feature>
<feature type="binding site" description="axial binding residue">
    <location>
        <position position="97"/>
    </location>
    <ligand>
        <name>heme b</name>
        <dbReference type="ChEBI" id="CHEBI:60344"/>
        <label>b562</label>
    </ligand>
    <ligandPart>
        <name>Fe</name>
        <dbReference type="ChEBI" id="CHEBI:18248"/>
    </ligandPart>
</feature>
<feature type="binding site" description="axial binding residue">
    <location>
        <position position="111"/>
    </location>
    <ligand>
        <name>heme b</name>
        <dbReference type="ChEBI" id="CHEBI:60344"/>
        <label>b566</label>
    </ligand>
    <ligandPart>
        <name>Fe</name>
        <dbReference type="ChEBI" id="CHEBI:18248"/>
    </ligandPart>
</feature>
<feature type="binding site" description="axial binding residue">
    <location>
        <position position="198"/>
    </location>
    <ligand>
        <name>heme b</name>
        <dbReference type="ChEBI" id="CHEBI:60344"/>
        <label>b562</label>
    </ligand>
    <ligandPart>
        <name>Fe</name>
        <dbReference type="ChEBI" id="CHEBI:18248"/>
    </ligandPart>
</feature>
<feature type="binding site" description="axial binding residue">
    <location>
        <position position="212"/>
    </location>
    <ligand>
        <name>heme b</name>
        <dbReference type="ChEBI" id="CHEBI:60344"/>
        <label>b566</label>
    </ligand>
    <ligandPart>
        <name>Fe</name>
        <dbReference type="ChEBI" id="CHEBI:18248"/>
    </ligandPart>
</feature>
<feature type="helix" evidence="6">
    <location>
        <begin position="14"/>
        <end position="22"/>
    </location>
</feature>
<feature type="helix" evidence="6">
    <location>
        <begin position="25"/>
        <end position="33"/>
    </location>
</feature>
<feature type="strand" evidence="6">
    <location>
        <begin position="36"/>
        <end position="38"/>
    </location>
</feature>
<feature type="helix" evidence="6">
    <location>
        <begin position="43"/>
        <end position="46"/>
    </location>
</feature>
<feature type="helix" evidence="6">
    <location>
        <begin position="47"/>
        <end position="66"/>
    </location>
</feature>
<feature type="turn" evidence="6">
    <location>
        <begin position="73"/>
        <end position="75"/>
    </location>
</feature>
<feature type="helix" evidence="6">
    <location>
        <begin position="76"/>
        <end position="86"/>
    </location>
</feature>
<feature type="helix" evidence="6">
    <location>
        <begin position="90"/>
        <end position="118"/>
    </location>
</feature>
<feature type="turn" evidence="6">
    <location>
        <begin position="119"/>
        <end position="121"/>
    </location>
</feature>
<feature type="helix" evidence="6">
    <location>
        <begin position="126"/>
        <end position="148"/>
    </location>
</feature>
<feature type="helix" evidence="6">
    <location>
        <begin position="153"/>
        <end position="167"/>
    </location>
</feature>
<feature type="turn" evidence="6">
    <location>
        <begin position="170"/>
        <end position="172"/>
    </location>
</feature>
<feature type="helix" evidence="6">
    <location>
        <begin position="173"/>
        <end position="181"/>
    </location>
</feature>
<feature type="strand" evidence="6">
    <location>
        <begin position="183"/>
        <end position="187"/>
    </location>
</feature>
<feature type="helix" evidence="6">
    <location>
        <begin position="188"/>
        <end position="219"/>
    </location>
</feature>
<feature type="helix" evidence="6">
    <location>
        <begin position="234"/>
        <end position="240"/>
    </location>
</feature>
<feature type="strand" evidence="6">
    <location>
        <begin position="241"/>
        <end position="243"/>
    </location>
</feature>
<feature type="helix" evidence="6">
    <location>
        <begin position="244"/>
        <end position="269"/>
    </location>
</feature>
<feature type="turn" evidence="6">
    <location>
        <begin position="271"/>
        <end position="274"/>
    </location>
</feature>
<feature type="helix" evidence="6">
    <location>
        <begin position="277"/>
        <end position="280"/>
    </location>
</feature>
<feature type="helix" evidence="6">
    <location>
        <begin position="296"/>
        <end position="298"/>
    </location>
</feature>
<feature type="helix" evidence="6">
    <location>
        <begin position="299"/>
        <end position="306"/>
    </location>
</feature>
<feature type="helix" evidence="6">
    <location>
        <begin position="313"/>
        <end position="321"/>
    </location>
</feature>
<feature type="turn" evidence="6">
    <location>
        <begin position="322"/>
        <end position="324"/>
    </location>
</feature>
<feature type="helix" evidence="6">
    <location>
        <begin position="328"/>
        <end position="344"/>
    </location>
</feature>
<feature type="helix" evidence="6">
    <location>
        <begin position="346"/>
        <end position="348"/>
    </location>
</feature>
<feature type="helix" evidence="6">
    <location>
        <begin position="357"/>
        <end position="359"/>
    </location>
</feature>
<feature type="helix" evidence="6">
    <location>
        <begin position="363"/>
        <end position="381"/>
    </location>
</feature>
<feature type="helix" evidence="6">
    <location>
        <begin position="389"/>
        <end position="405"/>
    </location>
</feature>
<feature type="helix" evidence="6">
    <location>
        <begin position="407"/>
        <end position="414"/>
    </location>
</feature>
<feature type="helix" evidence="6">
    <location>
        <begin position="424"/>
        <end position="429"/>
    </location>
</feature>
<dbReference type="EMBL" id="M17522">
    <property type="protein sequence ID" value="AAA25572.1"/>
    <property type="molecule type" value="Genomic_DNA"/>
</dbReference>
<dbReference type="EMBL" id="X05799">
    <property type="protein sequence ID" value="CAA29244.1"/>
    <property type="molecule type" value="Genomic_DNA"/>
</dbReference>
<dbReference type="PIR" id="B29413">
    <property type="entry name" value="B29413"/>
</dbReference>
<dbReference type="RefSeq" id="WP_011748590.1">
    <property type="nucleotide sequence ID" value="NZ_PPGA01000003.1"/>
</dbReference>
<dbReference type="PDB" id="2YIU">
    <property type="method" value="X-ray"/>
    <property type="resolution" value="2.70 A"/>
    <property type="chains" value="A/D=1-440"/>
</dbReference>
<dbReference type="PDBsum" id="2YIU"/>
<dbReference type="SMR" id="P05418"/>
<dbReference type="TCDB" id="3.D.3.1.1">
    <property type="family name" value="the proton-translocating quinol:cytochrome c reductase (qcr) superfamily"/>
</dbReference>
<dbReference type="GeneID" id="93450702"/>
<dbReference type="OMA" id="NISAWWN"/>
<dbReference type="BRENDA" id="7.1.1.8">
    <property type="organism ID" value="3341"/>
</dbReference>
<dbReference type="EvolutionaryTrace" id="P05418"/>
<dbReference type="GO" id="GO:0005886">
    <property type="term" value="C:plasma membrane"/>
    <property type="evidence" value="ECO:0007669"/>
    <property type="project" value="UniProtKB-SubCell"/>
</dbReference>
<dbReference type="GO" id="GO:0045275">
    <property type="term" value="C:respiratory chain complex III"/>
    <property type="evidence" value="ECO:0007669"/>
    <property type="project" value="InterPro"/>
</dbReference>
<dbReference type="GO" id="GO:0046872">
    <property type="term" value="F:metal ion binding"/>
    <property type="evidence" value="ECO:0007669"/>
    <property type="project" value="UniProtKB-KW"/>
</dbReference>
<dbReference type="GO" id="GO:0008121">
    <property type="term" value="F:ubiquinol-cytochrome-c reductase activity"/>
    <property type="evidence" value="ECO:0007669"/>
    <property type="project" value="InterPro"/>
</dbReference>
<dbReference type="GO" id="GO:0022904">
    <property type="term" value="P:respiratory electron transport chain"/>
    <property type="evidence" value="ECO:0007669"/>
    <property type="project" value="InterPro"/>
</dbReference>
<dbReference type="CDD" id="cd00290">
    <property type="entry name" value="cytochrome_b_C"/>
    <property type="match status" value="1"/>
</dbReference>
<dbReference type="CDD" id="cd00284">
    <property type="entry name" value="Cytochrome_b_N"/>
    <property type="match status" value="1"/>
</dbReference>
<dbReference type="FunFam" id="1.20.810.10:FF:000010">
    <property type="entry name" value="Cytochrome b"/>
    <property type="match status" value="1"/>
</dbReference>
<dbReference type="Gene3D" id="1.20.810.10">
    <property type="entry name" value="Cytochrome Bc1 Complex, Chain C"/>
    <property type="match status" value="1"/>
</dbReference>
<dbReference type="InterPro" id="IPR005798">
    <property type="entry name" value="Cyt_b/b6_C"/>
</dbReference>
<dbReference type="InterPro" id="IPR036150">
    <property type="entry name" value="Cyt_b/b6_C_sf"/>
</dbReference>
<dbReference type="InterPro" id="IPR005797">
    <property type="entry name" value="Cyt_b/b6_N"/>
</dbReference>
<dbReference type="InterPro" id="IPR027387">
    <property type="entry name" value="Cytb/b6-like_sf"/>
</dbReference>
<dbReference type="InterPro" id="IPR030689">
    <property type="entry name" value="Cytochrome_b"/>
</dbReference>
<dbReference type="InterPro" id="IPR048260">
    <property type="entry name" value="Cytochrome_b_C_euk/bac"/>
</dbReference>
<dbReference type="InterPro" id="IPR048259">
    <property type="entry name" value="Cytochrome_b_N_euk/bac"/>
</dbReference>
<dbReference type="InterPro" id="IPR016174">
    <property type="entry name" value="Di-haem_cyt_TM"/>
</dbReference>
<dbReference type="PANTHER" id="PTHR19271">
    <property type="entry name" value="CYTOCHROME B"/>
    <property type="match status" value="1"/>
</dbReference>
<dbReference type="PANTHER" id="PTHR19271:SF16">
    <property type="entry name" value="CYTOCHROME B"/>
    <property type="match status" value="1"/>
</dbReference>
<dbReference type="Pfam" id="PF00032">
    <property type="entry name" value="Cytochrom_B_C"/>
    <property type="match status" value="1"/>
</dbReference>
<dbReference type="Pfam" id="PF00033">
    <property type="entry name" value="Cytochrome_B"/>
    <property type="match status" value="1"/>
</dbReference>
<dbReference type="PIRSF" id="PIRSF038885">
    <property type="entry name" value="COB"/>
    <property type="match status" value="1"/>
</dbReference>
<dbReference type="SUPFAM" id="SSF81648">
    <property type="entry name" value="a domain/subunit of cytochrome bc1 complex (Ubiquinol-cytochrome c reductase)"/>
    <property type="match status" value="1"/>
</dbReference>
<dbReference type="SUPFAM" id="SSF81342">
    <property type="entry name" value="Transmembrane di-heme cytochromes"/>
    <property type="match status" value="1"/>
</dbReference>
<dbReference type="PROSITE" id="PS51003">
    <property type="entry name" value="CYTB_CTER"/>
    <property type="match status" value="1"/>
</dbReference>
<dbReference type="PROSITE" id="PS51002">
    <property type="entry name" value="CYTB_NTER"/>
    <property type="match status" value="1"/>
</dbReference>
<organism>
    <name type="scientific">Paracoccus denitrificans</name>
    <dbReference type="NCBI Taxonomy" id="266"/>
    <lineage>
        <taxon>Bacteria</taxon>
        <taxon>Pseudomonadati</taxon>
        <taxon>Pseudomonadota</taxon>
        <taxon>Alphaproteobacteria</taxon>
        <taxon>Rhodobacterales</taxon>
        <taxon>Paracoccaceae</taxon>
        <taxon>Paracoccus</taxon>
    </lineage>
</organism>
<protein>
    <recommendedName>
        <fullName>Cytochrome b</fullName>
    </recommendedName>
</protein>